<dbReference type="EMBL" id="AF003907">
    <property type="protein sequence ID" value="AAC48778.1"/>
    <property type="molecule type" value="mRNA"/>
</dbReference>
<dbReference type="EMBL" id="D26076">
    <property type="protein sequence ID" value="BAA05069.1"/>
    <property type="status" value="ALT_INIT"/>
    <property type="molecule type" value="mRNA"/>
</dbReference>
<dbReference type="PIR" id="JC5790">
    <property type="entry name" value="JC5790"/>
</dbReference>
<dbReference type="SMR" id="Q28678"/>
<dbReference type="FunCoup" id="Q28678">
    <property type="interactions" value="1344"/>
</dbReference>
<dbReference type="STRING" id="9986.ENSOCUP00000016544"/>
<dbReference type="PaxDb" id="9986-ENSOCUP00000016544"/>
<dbReference type="eggNOG" id="KOG3238">
    <property type="taxonomic scope" value="Eukaryota"/>
</dbReference>
<dbReference type="InParanoid" id="Q28678"/>
<dbReference type="Proteomes" id="UP000001811">
    <property type="component" value="Unplaced"/>
</dbReference>
<dbReference type="GO" id="GO:0005856">
    <property type="term" value="C:cytoskeleton"/>
    <property type="evidence" value="ECO:0007669"/>
    <property type="project" value="UniProtKB-SubCell"/>
</dbReference>
<dbReference type="GO" id="GO:0005829">
    <property type="term" value="C:cytosol"/>
    <property type="evidence" value="ECO:0000250"/>
    <property type="project" value="UniProtKB"/>
</dbReference>
<dbReference type="GO" id="GO:0034709">
    <property type="term" value="C:methylosome"/>
    <property type="evidence" value="ECO:0000250"/>
    <property type="project" value="UniProtKB"/>
</dbReference>
<dbReference type="GO" id="GO:0005634">
    <property type="term" value="C:nucleus"/>
    <property type="evidence" value="ECO:0000250"/>
    <property type="project" value="UniProtKB"/>
</dbReference>
<dbReference type="GO" id="GO:0034715">
    <property type="term" value="C:pICln-Sm protein complex"/>
    <property type="evidence" value="ECO:0000250"/>
    <property type="project" value="UniProtKB"/>
</dbReference>
<dbReference type="GO" id="GO:0005886">
    <property type="term" value="C:plasma membrane"/>
    <property type="evidence" value="ECO:0007669"/>
    <property type="project" value="InterPro"/>
</dbReference>
<dbReference type="GO" id="GO:0005681">
    <property type="term" value="C:spliceosomal complex"/>
    <property type="evidence" value="ECO:0007669"/>
    <property type="project" value="TreeGrafter"/>
</dbReference>
<dbReference type="GO" id="GO:0006884">
    <property type="term" value="P:cell volume homeostasis"/>
    <property type="evidence" value="ECO:0007669"/>
    <property type="project" value="InterPro"/>
</dbReference>
<dbReference type="GO" id="GO:0006821">
    <property type="term" value="P:chloride transport"/>
    <property type="evidence" value="ECO:0007669"/>
    <property type="project" value="InterPro"/>
</dbReference>
<dbReference type="GO" id="GO:0045292">
    <property type="term" value="P:mRNA cis splicing, via spliceosome"/>
    <property type="evidence" value="ECO:0007669"/>
    <property type="project" value="TreeGrafter"/>
</dbReference>
<dbReference type="GO" id="GO:0000387">
    <property type="term" value="P:spliceosomal snRNP assembly"/>
    <property type="evidence" value="ECO:0000250"/>
    <property type="project" value="UniProtKB"/>
</dbReference>
<dbReference type="FunFam" id="2.30.29.30:FF:000220">
    <property type="entry name" value="methylosome subunit pICln isoform X1"/>
    <property type="match status" value="1"/>
</dbReference>
<dbReference type="Gene3D" id="2.30.29.30">
    <property type="entry name" value="Pleckstrin-homology domain (PH domain)/Phosphotyrosine-binding domain (PTB)"/>
    <property type="match status" value="1"/>
</dbReference>
<dbReference type="InterPro" id="IPR003521">
    <property type="entry name" value="ICln"/>
</dbReference>
<dbReference type="InterPro" id="IPR039924">
    <property type="entry name" value="ICln/Lot5/Saf5"/>
</dbReference>
<dbReference type="InterPro" id="IPR011993">
    <property type="entry name" value="PH-like_dom_sf"/>
</dbReference>
<dbReference type="PANTHER" id="PTHR21399">
    <property type="entry name" value="CHLORIDE CONDUCTANCE REGULATORY PROTEIN ICLN"/>
    <property type="match status" value="1"/>
</dbReference>
<dbReference type="PANTHER" id="PTHR21399:SF0">
    <property type="entry name" value="METHYLOSOME SUBUNIT PICLN"/>
    <property type="match status" value="1"/>
</dbReference>
<dbReference type="Pfam" id="PF03517">
    <property type="entry name" value="Voldacs"/>
    <property type="match status" value="1"/>
</dbReference>
<dbReference type="PRINTS" id="PR01348">
    <property type="entry name" value="ICLNCHANNEL"/>
</dbReference>
<reference key="1">
    <citation type="journal article" date="1997" name="Biochem. Biophys. Res. Commun.">
        <title>Cloning and functional expression of a swelling-induced chloride conductance regulatory protein, plCln, from rabbit ocular ciliary epithelium.</title>
        <authorList>
            <person name="Wan X.L."/>
            <person name="Chen S."/>
            <person name="Sears M."/>
        </authorList>
    </citation>
    <scope>NUCLEOTIDE SEQUENCE [MRNA]</scope>
    <scope>TISSUE SPECIFICITY</scope>
    <source>
        <strain>New Zealand white</strain>
        <tissue>Ocular ciliary epithelium</tissue>
    </source>
</reference>
<reference key="2">
    <citation type="submission" date="1993-12" db="EMBL/GenBank/DDBJ databases">
        <title>Molecular cloning and expression of rabbit heart chloride channel.</title>
        <authorList>
            <person name="Okada H."/>
            <person name="Ishii K."/>
            <person name="Nunoki K."/>
            <person name="Taira N."/>
        </authorList>
    </citation>
    <scope>NUCLEOTIDE SEQUENCE [MRNA]</scope>
    <source>
        <strain>New Zealand white</strain>
        <tissue>Heart</tissue>
    </source>
</reference>
<organism>
    <name type="scientific">Oryctolagus cuniculus</name>
    <name type="common">Rabbit</name>
    <dbReference type="NCBI Taxonomy" id="9986"/>
    <lineage>
        <taxon>Eukaryota</taxon>
        <taxon>Metazoa</taxon>
        <taxon>Chordata</taxon>
        <taxon>Craniata</taxon>
        <taxon>Vertebrata</taxon>
        <taxon>Euteleostomi</taxon>
        <taxon>Mammalia</taxon>
        <taxon>Eutheria</taxon>
        <taxon>Euarchontoglires</taxon>
        <taxon>Glires</taxon>
        <taxon>Lagomorpha</taxon>
        <taxon>Leporidae</taxon>
        <taxon>Oryctolagus</taxon>
    </lineage>
</organism>
<name>ICLN_RABIT</name>
<proteinExistence type="evidence at transcript level"/>
<accession>Q28678</accession>
<accession>O02820</accession>
<protein>
    <recommendedName>
        <fullName>Methylosome subunit pICln</fullName>
    </recommendedName>
    <alternativeName>
        <fullName>Chloride channel, nucleotide sensitive 1A</fullName>
    </alternativeName>
    <alternativeName>
        <fullName>Chloride conductance regulatory protein ICln</fullName>
        <shortName>I(Cln)</shortName>
    </alternativeName>
</protein>
<gene>
    <name type="primary">CLNS1A</name>
    <name type="synonym">ICLN</name>
</gene>
<evidence type="ECO:0000250" key="1">
    <source>
        <dbReference type="UniProtKB" id="P54105"/>
    </source>
</evidence>
<evidence type="ECO:0000256" key="2">
    <source>
        <dbReference type="SAM" id="MobiDB-lite"/>
    </source>
</evidence>
<evidence type="ECO:0000269" key="3">
    <source>
    </source>
</evidence>
<evidence type="ECO:0000305" key="4"/>
<comment type="function">
    <text evidence="1">Involved in both the assembly of spliceosomal snRNPs and the methylation of Sm proteins (By similarity). Chaperone that regulates the assembly of spliceosomal U1, U2, U4 and U5 small nuclear ribonucleoproteins (snRNPs), the building blocks of the spliceosome, and thereby plays an important role in the splicing of cellular pre-mRNAs (By similarity). Most spliceosomal snRNPs contain a common set of Sm proteins SNRPB, SNRPD1, SNRPD2, SNRPD3, SNRPE, SNRPF and SNRPG that assemble in a heptameric protein ring on the Sm site of the small nuclear RNA to form the core snRNP (Sm core) (By similarity). In the cytosol, the Sm proteins SNRPD1, SNRPD2, SNRPE, SNRPF and SNRPG are trapped in an inactive 6S pICln-Sm complex by the chaperone CLNS1A that controls the assembly of the core snRNP (By similarity). Dissociation by the SMN complex of CLNS1A from the trapped Sm proteins and their transfer to an SMN-Sm complex triggers the assembly of core snRNPs and their transport to the nucleus (By similarity).</text>
</comment>
<comment type="subunit">
    <text evidence="1">Component of the methylosome, a 20S complex containing at least PRMT5/SKB1, WDR77/MEP50 and CLNS1A/pICln. May mediate SNRPD1 and SNRPD3 methylation. Forms a 6S pICln-Sm complex composed of CLNS1A/pICln, SNRPD1, SNRPD2, SNRPE, SNRPF and SNRPG; ring-like structure where CLNS1A/pICln mimics additional Sm proteins and which is unable to assemble into the core snRNP. Interacts with LSM10 and LSM11.</text>
</comment>
<comment type="subcellular location">
    <subcellularLocation>
        <location evidence="1">Cytoplasm</location>
        <location evidence="1">Cytosol</location>
    </subcellularLocation>
    <subcellularLocation>
        <location evidence="1">Nucleus</location>
    </subcellularLocation>
    <subcellularLocation>
        <location evidence="1">Cytoplasm</location>
        <location evidence="1">Cytoskeleton</location>
    </subcellularLocation>
    <text evidence="1">A small fraction is also associated with the cytoskeleton.</text>
</comment>
<comment type="tissue specificity">
    <text evidence="3">Widely distributed but expressed more abundantly in nonpigmented ciliary epithelial cells than in pigmented ones.</text>
</comment>
<comment type="similarity">
    <text evidence="4">Belongs to the pICln (TC 1.A.47) family.</text>
</comment>
<comment type="sequence caution" evidence="4">
    <conflict type="erroneous initiation">
        <sequence resource="EMBL-CDS" id="BAA05069"/>
    </conflict>
</comment>
<feature type="initiator methionine" description="Removed" evidence="1">
    <location>
        <position position="1"/>
    </location>
</feature>
<feature type="chain" id="PRO_0000224183" description="Methylosome subunit pICln">
    <location>
        <begin position="2"/>
        <end position="236"/>
    </location>
</feature>
<feature type="region of interest" description="Disordered" evidence="2">
    <location>
        <begin position="1"/>
        <end position="20"/>
    </location>
</feature>
<feature type="modified residue" description="N-acetylserine" evidence="1">
    <location>
        <position position="2"/>
    </location>
</feature>
<feature type="modified residue" description="Phosphoserine" evidence="1">
    <location>
        <position position="101"/>
    </location>
</feature>
<feature type="modified residue" description="Phosphoserine" evidence="1">
    <location>
        <position position="143"/>
    </location>
</feature>
<feature type="modified residue" description="Phosphoserine" evidence="1">
    <location>
        <position position="192"/>
    </location>
</feature>
<feature type="modified residue" description="Phosphoserine" evidence="1">
    <location>
        <position position="194"/>
    </location>
</feature>
<feature type="modified residue" description="Phosphoserine" evidence="1">
    <location>
        <position position="197"/>
    </location>
</feature>
<feature type="modified residue" description="Phosphoserine" evidence="1">
    <location>
        <position position="209"/>
    </location>
</feature>
<feature type="modified residue" description="Phosphothreonine" evidence="1">
    <location>
        <position position="222"/>
    </location>
</feature>
<feature type="sequence conflict" description="In Ref. 2; BAA05069." evidence="4" ref="2">
    <original>K</original>
    <variation>R</variation>
    <location>
        <position position="5"/>
    </location>
</feature>
<feature type="sequence conflict" description="In Ref. 2; BAA05069." evidence="4" ref="2">
    <original>P</original>
    <variation>L</variation>
    <location>
        <position position="8"/>
    </location>
</feature>
<feature type="sequence conflict" description="In Ref. 1; AAC48778." evidence="4" ref="1">
    <original>L</original>
    <variation>W</variation>
    <location>
        <position position="184"/>
    </location>
</feature>
<sequence>MSFLKSFPPPGPTEGLRHQQPDTEAVLNGKGLGTGTLYIAESRLSWLDGSGLGFSLEYPTISLHAVSRDPNAYPQEHLYVMVNAKFGEESKELVADEEEDSDDDVEPISEFRFVPGDKSALEAMFTAMCECQALHPDPEDEDSDDYDGEEYDVEAHEQGQGDIPTFYTYEEGLSHLTAEGQATLERLEGMLSQSVSSQYNMAGVRTEDSIRDYEDGMEVDTTPTVAGQFEDADVDH</sequence>
<keyword id="KW-0007">Acetylation</keyword>
<keyword id="KW-0963">Cytoplasm</keyword>
<keyword id="KW-0206">Cytoskeleton</keyword>
<keyword id="KW-0507">mRNA processing</keyword>
<keyword id="KW-0508">mRNA splicing</keyword>
<keyword id="KW-0539">Nucleus</keyword>
<keyword id="KW-0597">Phosphoprotein</keyword>
<keyword id="KW-1185">Reference proteome</keyword>